<protein>
    <recommendedName>
        <fullName evidence="1">Large ribosomal subunit protein uL5</fullName>
    </recommendedName>
    <alternativeName>
        <fullName evidence="2">50S ribosomal protein L5</fullName>
    </alternativeName>
</protein>
<reference key="1">
    <citation type="journal article" date="2006" name="Nat. Biotechnol.">
        <title>Complete genome sequence of the entomopathogenic and metabolically versatile soil bacterium Pseudomonas entomophila.</title>
        <authorList>
            <person name="Vodovar N."/>
            <person name="Vallenet D."/>
            <person name="Cruveiller S."/>
            <person name="Rouy Z."/>
            <person name="Barbe V."/>
            <person name="Acosta C."/>
            <person name="Cattolico L."/>
            <person name="Jubin C."/>
            <person name="Lajus A."/>
            <person name="Segurens B."/>
            <person name="Vacherie B."/>
            <person name="Wincker P."/>
            <person name="Weissenbach J."/>
            <person name="Lemaitre B."/>
            <person name="Medigue C."/>
            <person name="Boccard F."/>
        </authorList>
    </citation>
    <scope>NUCLEOTIDE SEQUENCE [LARGE SCALE GENOMIC DNA]</scope>
    <source>
        <strain>L48</strain>
    </source>
</reference>
<accession>Q1IFV4</accession>
<evidence type="ECO:0000255" key="1">
    <source>
        <dbReference type="HAMAP-Rule" id="MF_01333"/>
    </source>
</evidence>
<evidence type="ECO:0000305" key="2"/>
<comment type="function">
    <text evidence="1">This is one of the proteins that bind and probably mediate the attachment of the 5S RNA into the large ribosomal subunit, where it forms part of the central protuberance. In the 70S ribosome it contacts protein S13 of the 30S subunit (bridge B1b), connecting the 2 subunits; this bridge is implicated in subunit movement. Contacts the P site tRNA; the 5S rRNA and some of its associated proteins might help stabilize positioning of ribosome-bound tRNAs.</text>
</comment>
<comment type="subunit">
    <text evidence="1">Part of the 50S ribosomal subunit; part of the 5S rRNA/L5/L18/L25 subcomplex. Contacts the 5S rRNA and the P site tRNA. Forms a bridge to the 30S subunit in the 70S ribosome.</text>
</comment>
<comment type="similarity">
    <text evidence="1">Belongs to the universal ribosomal protein uL5 family.</text>
</comment>
<sequence length="179" mass="20398">MARLKEIYRNEIAPKLKEELKLSNVMEVPRVTKITLNMGLGEAIGDKKVIEHAVADLEKITGQKPVVTFARKSIAGFKVREGWPIGVKVTLRRDKMYEFLDRLLAISLPRVRDFRGLNAKSFDGRGNYSMGVKEQIIFPEIDYDKIDALRGLDITLTTTARSDDEGRALLRAFKFPFRN</sequence>
<gene>
    <name evidence="1" type="primary">rplE</name>
    <name type="ordered locus">PSEEN0502</name>
</gene>
<name>RL5_PSEE4</name>
<dbReference type="EMBL" id="CT573326">
    <property type="protein sequence ID" value="CAK13448.1"/>
    <property type="molecule type" value="Genomic_DNA"/>
</dbReference>
<dbReference type="RefSeq" id="WP_003257095.1">
    <property type="nucleotide sequence ID" value="NC_008027.1"/>
</dbReference>
<dbReference type="SMR" id="Q1IFV4"/>
<dbReference type="STRING" id="384676.PSEEN0502"/>
<dbReference type="GeneID" id="97165991"/>
<dbReference type="KEGG" id="pen:PSEEN0502"/>
<dbReference type="eggNOG" id="COG0094">
    <property type="taxonomic scope" value="Bacteria"/>
</dbReference>
<dbReference type="HOGENOM" id="CLU_061015_2_1_6"/>
<dbReference type="OrthoDB" id="9806626at2"/>
<dbReference type="Proteomes" id="UP000000658">
    <property type="component" value="Chromosome"/>
</dbReference>
<dbReference type="GO" id="GO:1990904">
    <property type="term" value="C:ribonucleoprotein complex"/>
    <property type="evidence" value="ECO:0007669"/>
    <property type="project" value="UniProtKB-KW"/>
</dbReference>
<dbReference type="GO" id="GO:0005840">
    <property type="term" value="C:ribosome"/>
    <property type="evidence" value="ECO:0007669"/>
    <property type="project" value="UniProtKB-KW"/>
</dbReference>
<dbReference type="GO" id="GO:0019843">
    <property type="term" value="F:rRNA binding"/>
    <property type="evidence" value="ECO:0007669"/>
    <property type="project" value="UniProtKB-UniRule"/>
</dbReference>
<dbReference type="GO" id="GO:0003735">
    <property type="term" value="F:structural constituent of ribosome"/>
    <property type="evidence" value="ECO:0007669"/>
    <property type="project" value="InterPro"/>
</dbReference>
<dbReference type="GO" id="GO:0000049">
    <property type="term" value="F:tRNA binding"/>
    <property type="evidence" value="ECO:0007669"/>
    <property type="project" value="UniProtKB-UniRule"/>
</dbReference>
<dbReference type="GO" id="GO:0006412">
    <property type="term" value="P:translation"/>
    <property type="evidence" value="ECO:0007669"/>
    <property type="project" value="UniProtKB-UniRule"/>
</dbReference>
<dbReference type="FunFam" id="3.30.1440.10:FF:000001">
    <property type="entry name" value="50S ribosomal protein L5"/>
    <property type="match status" value="1"/>
</dbReference>
<dbReference type="Gene3D" id="3.30.1440.10">
    <property type="match status" value="1"/>
</dbReference>
<dbReference type="HAMAP" id="MF_01333_B">
    <property type="entry name" value="Ribosomal_uL5_B"/>
    <property type="match status" value="1"/>
</dbReference>
<dbReference type="InterPro" id="IPR002132">
    <property type="entry name" value="Ribosomal_uL5"/>
</dbReference>
<dbReference type="InterPro" id="IPR020930">
    <property type="entry name" value="Ribosomal_uL5_bac-type"/>
</dbReference>
<dbReference type="InterPro" id="IPR031309">
    <property type="entry name" value="Ribosomal_uL5_C"/>
</dbReference>
<dbReference type="InterPro" id="IPR020929">
    <property type="entry name" value="Ribosomal_uL5_CS"/>
</dbReference>
<dbReference type="InterPro" id="IPR022803">
    <property type="entry name" value="Ribosomal_uL5_dom_sf"/>
</dbReference>
<dbReference type="InterPro" id="IPR031310">
    <property type="entry name" value="Ribosomal_uL5_N"/>
</dbReference>
<dbReference type="NCBIfam" id="NF000585">
    <property type="entry name" value="PRK00010.1"/>
    <property type="match status" value="1"/>
</dbReference>
<dbReference type="PANTHER" id="PTHR11994">
    <property type="entry name" value="60S RIBOSOMAL PROTEIN L11-RELATED"/>
    <property type="match status" value="1"/>
</dbReference>
<dbReference type="Pfam" id="PF00281">
    <property type="entry name" value="Ribosomal_L5"/>
    <property type="match status" value="1"/>
</dbReference>
<dbReference type="Pfam" id="PF00673">
    <property type="entry name" value="Ribosomal_L5_C"/>
    <property type="match status" value="1"/>
</dbReference>
<dbReference type="PIRSF" id="PIRSF002161">
    <property type="entry name" value="Ribosomal_L5"/>
    <property type="match status" value="1"/>
</dbReference>
<dbReference type="SUPFAM" id="SSF55282">
    <property type="entry name" value="RL5-like"/>
    <property type="match status" value="1"/>
</dbReference>
<dbReference type="PROSITE" id="PS00358">
    <property type="entry name" value="RIBOSOMAL_L5"/>
    <property type="match status" value="1"/>
</dbReference>
<keyword id="KW-0687">Ribonucleoprotein</keyword>
<keyword id="KW-0689">Ribosomal protein</keyword>
<keyword id="KW-0694">RNA-binding</keyword>
<keyword id="KW-0699">rRNA-binding</keyword>
<keyword id="KW-0820">tRNA-binding</keyword>
<organism>
    <name type="scientific">Pseudomonas entomophila (strain L48)</name>
    <dbReference type="NCBI Taxonomy" id="384676"/>
    <lineage>
        <taxon>Bacteria</taxon>
        <taxon>Pseudomonadati</taxon>
        <taxon>Pseudomonadota</taxon>
        <taxon>Gammaproteobacteria</taxon>
        <taxon>Pseudomonadales</taxon>
        <taxon>Pseudomonadaceae</taxon>
        <taxon>Pseudomonas</taxon>
    </lineage>
</organism>
<feature type="chain" id="PRO_1000052800" description="Large ribosomal subunit protein uL5">
    <location>
        <begin position="1"/>
        <end position="179"/>
    </location>
</feature>
<proteinExistence type="inferred from homology"/>